<protein>
    <recommendedName>
        <fullName evidence="1">Mannitol-1-phosphate 5-dehydrogenase</fullName>
        <ecNumber evidence="1">1.1.1.17</ecNumber>
    </recommendedName>
</protein>
<sequence>MKHSVHFGAGNIGRGFIGEILFKNGFHIDFVDVNNQIIHALNEKGKYEIEIAQKGQSRIEVTNVAGINSKEHPEQVIEAIQRTDIITTAIGPNILPFIAELLAKGIEARRVAGNTQALDVMACKNMIGGSQFLYQEVKKYLSPEGLTFADNYIGFPNAAVDRIVPAQSHEDSLFVVVEPFNEWVVETKRLKNPDLRLKDVHYEEDLEPFIERKLFSVNSGHATSAYIGAHYGAKTILEALQNPNIKSRIESVLAEIRSLLIAKWNFDKKELENYHKVIIERFENPFIVDEVSRVARTPIRKLGYNERFIRPIRELKELSLSYKNLLKTVGYAFDYRDVNDEESIRLGELLAKQSVKDVVIQVTGLDDQELIDQIVEYI</sequence>
<dbReference type="EC" id="1.1.1.17" evidence="1"/>
<dbReference type="EMBL" id="CP000918">
    <property type="protein sequence ID" value="ACO16745.1"/>
    <property type="molecule type" value="Genomic_DNA"/>
</dbReference>
<dbReference type="RefSeq" id="WP_000682980.1">
    <property type="nucleotide sequence ID" value="NC_012468.1"/>
</dbReference>
<dbReference type="SMR" id="C1C5D6"/>
<dbReference type="KEGG" id="snm:SP70585_0470"/>
<dbReference type="HOGENOM" id="CLU_036089_2_0_9"/>
<dbReference type="Proteomes" id="UP000002211">
    <property type="component" value="Chromosome"/>
</dbReference>
<dbReference type="GO" id="GO:0005829">
    <property type="term" value="C:cytosol"/>
    <property type="evidence" value="ECO:0007669"/>
    <property type="project" value="TreeGrafter"/>
</dbReference>
<dbReference type="GO" id="GO:0008926">
    <property type="term" value="F:mannitol-1-phosphate 5-dehydrogenase activity"/>
    <property type="evidence" value="ECO:0007669"/>
    <property type="project" value="UniProtKB-UniRule"/>
</dbReference>
<dbReference type="GO" id="GO:0019592">
    <property type="term" value="P:mannitol catabolic process"/>
    <property type="evidence" value="ECO:0007669"/>
    <property type="project" value="TreeGrafter"/>
</dbReference>
<dbReference type="FunFam" id="1.10.1040.10:FF:000042">
    <property type="entry name" value="Mannitol-1-phosphate 5-dehydrogenase"/>
    <property type="match status" value="1"/>
</dbReference>
<dbReference type="FunFam" id="3.40.50.720:FF:000586">
    <property type="entry name" value="Mannitol-1-phosphate 5-dehydrogenase"/>
    <property type="match status" value="1"/>
</dbReference>
<dbReference type="Gene3D" id="1.10.1040.10">
    <property type="entry name" value="N-(1-d-carboxylethyl)-l-norvaline Dehydrogenase, domain 2"/>
    <property type="match status" value="1"/>
</dbReference>
<dbReference type="Gene3D" id="3.40.50.720">
    <property type="entry name" value="NAD(P)-binding Rossmann-like Domain"/>
    <property type="match status" value="1"/>
</dbReference>
<dbReference type="HAMAP" id="MF_00196">
    <property type="entry name" value="Mannitol_dehydrog"/>
    <property type="match status" value="1"/>
</dbReference>
<dbReference type="InterPro" id="IPR008927">
    <property type="entry name" value="6-PGluconate_DH-like_C_sf"/>
</dbReference>
<dbReference type="InterPro" id="IPR013328">
    <property type="entry name" value="6PGD_dom2"/>
</dbReference>
<dbReference type="InterPro" id="IPR023028">
    <property type="entry name" value="Mannitol_1_phos_5_DH"/>
</dbReference>
<dbReference type="InterPro" id="IPR000669">
    <property type="entry name" value="Mannitol_DH"/>
</dbReference>
<dbReference type="InterPro" id="IPR013118">
    <property type="entry name" value="Mannitol_DH_C"/>
</dbReference>
<dbReference type="InterPro" id="IPR023027">
    <property type="entry name" value="Mannitol_DH_CS"/>
</dbReference>
<dbReference type="InterPro" id="IPR013131">
    <property type="entry name" value="Mannitol_DH_N"/>
</dbReference>
<dbReference type="InterPro" id="IPR036291">
    <property type="entry name" value="NAD(P)-bd_dom_sf"/>
</dbReference>
<dbReference type="NCBIfam" id="NF002647">
    <property type="entry name" value="PRK02318.1-3"/>
    <property type="match status" value="1"/>
</dbReference>
<dbReference type="NCBIfam" id="NF002652">
    <property type="entry name" value="PRK02318.2-5"/>
    <property type="match status" value="1"/>
</dbReference>
<dbReference type="PANTHER" id="PTHR30524:SF0">
    <property type="entry name" value="ALTRONATE OXIDOREDUCTASE-RELATED"/>
    <property type="match status" value="1"/>
</dbReference>
<dbReference type="PANTHER" id="PTHR30524">
    <property type="entry name" value="MANNITOL-1-PHOSPHATE 5-DEHYDROGENASE"/>
    <property type="match status" value="1"/>
</dbReference>
<dbReference type="Pfam" id="PF01232">
    <property type="entry name" value="Mannitol_dh"/>
    <property type="match status" value="1"/>
</dbReference>
<dbReference type="Pfam" id="PF08125">
    <property type="entry name" value="Mannitol_dh_C"/>
    <property type="match status" value="1"/>
</dbReference>
<dbReference type="PRINTS" id="PR00084">
    <property type="entry name" value="MTLDHDRGNASE"/>
</dbReference>
<dbReference type="SUPFAM" id="SSF48179">
    <property type="entry name" value="6-phosphogluconate dehydrogenase C-terminal domain-like"/>
    <property type="match status" value="1"/>
</dbReference>
<dbReference type="SUPFAM" id="SSF51735">
    <property type="entry name" value="NAD(P)-binding Rossmann-fold domains"/>
    <property type="match status" value="1"/>
</dbReference>
<dbReference type="PROSITE" id="PS00974">
    <property type="entry name" value="MANNITOL_DHGENASE"/>
    <property type="match status" value="1"/>
</dbReference>
<evidence type="ECO:0000255" key="1">
    <source>
        <dbReference type="HAMAP-Rule" id="MF_00196"/>
    </source>
</evidence>
<gene>
    <name evidence="1" type="primary">mtlD</name>
    <name type="ordered locus">SP70585_0470</name>
</gene>
<reference key="1">
    <citation type="journal article" date="2010" name="Genome Biol.">
        <title>Structure and dynamics of the pan-genome of Streptococcus pneumoniae and closely related species.</title>
        <authorList>
            <person name="Donati C."/>
            <person name="Hiller N.L."/>
            <person name="Tettelin H."/>
            <person name="Muzzi A."/>
            <person name="Croucher N.J."/>
            <person name="Angiuoli S.V."/>
            <person name="Oggioni M."/>
            <person name="Dunning Hotopp J.C."/>
            <person name="Hu F.Z."/>
            <person name="Riley D.R."/>
            <person name="Covacci A."/>
            <person name="Mitchell T.J."/>
            <person name="Bentley S.D."/>
            <person name="Kilian M."/>
            <person name="Ehrlich G.D."/>
            <person name="Rappuoli R."/>
            <person name="Moxon E.R."/>
            <person name="Masignani V."/>
        </authorList>
    </citation>
    <scope>NUCLEOTIDE SEQUENCE [LARGE SCALE GENOMIC DNA]</scope>
    <source>
        <strain>70585</strain>
    </source>
</reference>
<organism>
    <name type="scientific">Streptococcus pneumoniae (strain 70585)</name>
    <dbReference type="NCBI Taxonomy" id="488221"/>
    <lineage>
        <taxon>Bacteria</taxon>
        <taxon>Bacillati</taxon>
        <taxon>Bacillota</taxon>
        <taxon>Bacilli</taxon>
        <taxon>Lactobacillales</taxon>
        <taxon>Streptococcaceae</taxon>
        <taxon>Streptococcus</taxon>
    </lineage>
</organism>
<feature type="chain" id="PRO_1000124392" description="Mannitol-1-phosphate 5-dehydrogenase">
    <location>
        <begin position="1"/>
        <end position="378"/>
    </location>
</feature>
<feature type="binding site" evidence="1">
    <location>
        <begin position="4"/>
        <end position="15"/>
    </location>
    <ligand>
        <name>NAD(+)</name>
        <dbReference type="ChEBI" id="CHEBI:57540"/>
    </ligand>
</feature>
<accession>C1C5D6</accession>
<comment type="catalytic activity">
    <reaction evidence="1">
        <text>D-mannitol 1-phosphate + NAD(+) = beta-D-fructose 6-phosphate + NADH + H(+)</text>
        <dbReference type="Rhea" id="RHEA:19661"/>
        <dbReference type="ChEBI" id="CHEBI:15378"/>
        <dbReference type="ChEBI" id="CHEBI:57540"/>
        <dbReference type="ChEBI" id="CHEBI:57634"/>
        <dbReference type="ChEBI" id="CHEBI:57945"/>
        <dbReference type="ChEBI" id="CHEBI:61381"/>
        <dbReference type="EC" id="1.1.1.17"/>
    </reaction>
</comment>
<comment type="similarity">
    <text evidence="1">Belongs to the mannitol dehydrogenase family.</text>
</comment>
<proteinExistence type="inferred from homology"/>
<keyword id="KW-0520">NAD</keyword>
<keyword id="KW-0560">Oxidoreductase</keyword>
<name>MTLD_STRP7</name>